<sequence length="102" mass="11166">MAKGQSLQDPFLNALRRERVPVSIYLVNGIKLQGQIESFDQFVILLKNTVSQMVYKHAISTVVPSRPVSHHSNNAGGGTSSNYHHGSSAQNTSAQQDSEETE</sequence>
<gene>
    <name evidence="1" type="primary">hfq</name>
    <name type="ordered locus">E2348C_4495</name>
</gene>
<comment type="function">
    <text evidence="1">RNA chaperone that binds small regulatory RNA (sRNAs) and mRNAs to facilitate mRNA translational regulation in response to envelope stress, environmental stress and changes in metabolite concentrations. Also binds with high specificity to tRNAs.</text>
</comment>
<comment type="subunit">
    <text evidence="1">Homohexamer.</text>
</comment>
<comment type="similarity">
    <text evidence="1">Belongs to the Hfq family.</text>
</comment>
<accession>B7UQI1</accession>
<protein>
    <recommendedName>
        <fullName evidence="1">RNA-binding protein Hfq</fullName>
    </recommendedName>
</protein>
<reference key="1">
    <citation type="journal article" date="2009" name="J. Bacteriol.">
        <title>Complete genome sequence and comparative genome analysis of enteropathogenic Escherichia coli O127:H6 strain E2348/69.</title>
        <authorList>
            <person name="Iguchi A."/>
            <person name="Thomson N.R."/>
            <person name="Ogura Y."/>
            <person name="Saunders D."/>
            <person name="Ooka T."/>
            <person name="Henderson I.R."/>
            <person name="Harris D."/>
            <person name="Asadulghani M."/>
            <person name="Kurokawa K."/>
            <person name="Dean P."/>
            <person name="Kenny B."/>
            <person name="Quail M.A."/>
            <person name="Thurston S."/>
            <person name="Dougan G."/>
            <person name="Hayashi T."/>
            <person name="Parkhill J."/>
            <person name="Frankel G."/>
        </authorList>
    </citation>
    <scope>NUCLEOTIDE SEQUENCE [LARGE SCALE GENOMIC DNA]</scope>
    <source>
        <strain>E2348/69 / EPEC</strain>
    </source>
</reference>
<dbReference type="EMBL" id="FM180568">
    <property type="protein sequence ID" value="CAS12043.1"/>
    <property type="molecule type" value="Genomic_DNA"/>
</dbReference>
<dbReference type="RefSeq" id="WP_001051883.1">
    <property type="nucleotide sequence ID" value="NC_011601.1"/>
</dbReference>
<dbReference type="SMR" id="B7UQI1"/>
<dbReference type="GeneID" id="93777649"/>
<dbReference type="KEGG" id="ecg:E2348C_4495"/>
<dbReference type="HOGENOM" id="CLU_113688_2_1_6"/>
<dbReference type="Proteomes" id="UP000008205">
    <property type="component" value="Chromosome"/>
</dbReference>
<dbReference type="GO" id="GO:0005829">
    <property type="term" value="C:cytosol"/>
    <property type="evidence" value="ECO:0007669"/>
    <property type="project" value="TreeGrafter"/>
</dbReference>
<dbReference type="GO" id="GO:0003723">
    <property type="term" value="F:RNA binding"/>
    <property type="evidence" value="ECO:0007669"/>
    <property type="project" value="UniProtKB-UniRule"/>
</dbReference>
<dbReference type="GO" id="GO:0006355">
    <property type="term" value="P:regulation of DNA-templated transcription"/>
    <property type="evidence" value="ECO:0007669"/>
    <property type="project" value="InterPro"/>
</dbReference>
<dbReference type="GO" id="GO:0043487">
    <property type="term" value="P:regulation of RNA stability"/>
    <property type="evidence" value="ECO:0007669"/>
    <property type="project" value="TreeGrafter"/>
</dbReference>
<dbReference type="GO" id="GO:0045974">
    <property type="term" value="P:regulation of translation, ncRNA-mediated"/>
    <property type="evidence" value="ECO:0007669"/>
    <property type="project" value="TreeGrafter"/>
</dbReference>
<dbReference type="CDD" id="cd01716">
    <property type="entry name" value="Hfq"/>
    <property type="match status" value="1"/>
</dbReference>
<dbReference type="FunFam" id="2.30.30.100:FF:000001">
    <property type="entry name" value="RNA-binding protein Hfq"/>
    <property type="match status" value="1"/>
</dbReference>
<dbReference type="Gene3D" id="2.30.30.100">
    <property type="match status" value="1"/>
</dbReference>
<dbReference type="HAMAP" id="MF_00436">
    <property type="entry name" value="Hfq"/>
    <property type="match status" value="1"/>
</dbReference>
<dbReference type="InterPro" id="IPR005001">
    <property type="entry name" value="Hfq"/>
</dbReference>
<dbReference type="InterPro" id="IPR010920">
    <property type="entry name" value="LSM_dom_sf"/>
</dbReference>
<dbReference type="InterPro" id="IPR047575">
    <property type="entry name" value="Sm"/>
</dbReference>
<dbReference type="NCBIfam" id="TIGR02383">
    <property type="entry name" value="Hfq"/>
    <property type="match status" value="1"/>
</dbReference>
<dbReference type="NCBIfam" id="NF001602">
    <property type="entry name" value="PRK00395.1"/>
    <property type="match status" value="1"/>
</dbReference>
<dbReference type="PANTHER" id="PTHR34772">
    <property type="entry name" value="RNA-BINDING PROTEIN HFQ"/>
    <property type="match status" value="1"/>
</dbReference>
<dbReference type="PANTHER" id="PTHR34772:SF1">
    <property type="entry name" value="RNA-BINDING PROTEIN HFQ"/>
    <property type="match status" value="1"/>
</dbReference>
<dbReference type="Pfam" id="PF17209">
    <property type="entry name" value="Hfq"/>
    <property type="match status" value="1"/>
</dbReference>
<dbReference type="SUPFAM" id="SSF50182">
    <property type="entry name" value="Sm-like ribonucleoproteins"/>
    <property type="match status" value="1"/>
</dbReference>
<dbReference type="PROSITE" id="PS52002">
    <property type="entry name" value="SM"/>
    <property type="match status" value="1"/>
</dbReference>
<organism>
    <name type="scientific">Escherichia coli O127:H6 (strain E2348/69 / EPEC)</name>
    <dbReference type="NCBI Taxonomy" id="574521"/>
    <lineage>
        <taxon>Bacteria</taxon>
        <taxon>Pseudomonadati</taxon>
        <taxon>Pseudomonadota</taxon>
        <taxon>Gammaproteobacteria</taxon>
        <taxon>Enterobacterales</taxon>
        <taxon>Enterobacteriaceae</taxon>
        <taxon>Escherichia</taxon>
    </lineage>
</organism>
<feature type="chain" id="PRO_1000135031" description="RNA-binding protein Hfq">
    <location>
        <begin position="1"/>
        <end position="102"/>
    </location>
</feature>
<feature type="domain" description="Sm" evidence="2">
    <location>
        <begin position="9"/>
        <end position="68"/>
    </location>
</feature>
<feature type="region of interest" description="Disordered" evidence="3">
    <location>
        <begin position="63"/>
        <end position="102"/>
    </location>
</feature>
<feature type="compositionally biased region" description="Polar residues" evidence="3">
    <location>
        <begin position="70"/>
        <end position="96"/>
    </location>
</feature>
<keyword id="KW-1185">Reference proteome</keyword>
<keyword id="KW-0694">RNA-binding</keyword>
<keyword id="KW-0346">Stress response</keyword>
<evidence type="ECO:0000255" key="1">
    <source>
        <dbReference type="HAMAP-Rule" id="MF_00436"/>
    </source>
</evidence>
<evidence type="ECO:0000255" key="2">
    <source>
        <dbReference type="PROSITE-ProRule" id="PRU01346"/>
    </source>
</evidence>
<evidence type="ECO:0000256" key="3">
    <source>
        <dbReference type="SAM" id="MobiDB-lite"/>
    </source>
</evidence>
<proteinExistence type="inferred from homology"/>
<name>HFQ_ECO27</name>